<protein>
    <recommendedName>
        <fullName>Tetracycline resistance leader peptide</fullName>
    </recommendedName>
</protein>
<accession>P0A3N2</accession>
<accession>P05658</accession>
<dbReference type="EMBL" id="X51366">
    <property type="protein sequence ID" value="CAA35750.1"/>
    <property type="molecule type" value="Genomic_DNA"/>
</dbReference>
<dbReference type="PIR" id="S09233">
    <property type="entry name" value="LFBSTU"/>
</dbReference>
<dbReference type="GO" id="GO:0046677">
    <property type="term" value="P:response to antibiotic"/>
    <property type="evidence" value="ECO:0007669"/>
    <property type="project" value="UniProtKB-KW"/>
</dbReference>
<dbReference type="InterPro" id="IPR012618">
    <property type="entry name" value="Tet-R_leader_TetL"/>
</dbReference>
<dbReference type="NCBIfam" id="NF033685">
    <property type="entry name" value="Tet_leader_L"/>
    <property type="match status" value="1"/>
</dbReference>
<dbReference type="Pfam" id="PF08050">
    <property type="entry name" value="Tet_res_leader"/>
    <property type="match status" value="1"/>
</dbReference>
<organism>
    <name type="scientific">Bacillus cereus</name>
    <dbReference type="NCBI Taxonomy" id="1396"/>
    <lineage>
        <taxon>Bacteria</taxon>
        <taxon>Bacillati</taxon>
        <taxon>Bacillota</taxon>
        <taxon>Bacilli</taxon>
        <taxon>Bacillales</taxon>
        <taxon>Bacillaceae</taxon>
        <taxon>Bacillus</taxon>
        <taxon>Bacillus cereus group</taxon>
    </lineage>
</organism>
<feature type="peptide" id="PRO_0000044015" description="Tetracycline resistance leader peptide">
    <location>
        <begin position="1"/>
        <end position="20"/>
    </location>
</feature>
<geneLocation type="plasmid">
    <name>pBC16</name>
</geneLocation>
<name>LPTR_BACCE</name>
<gene>
    <name type="primary">tetL</name>
</gene>
<proteinExistence type="predicted"/>
<sequence>MKCNECNRVQLKEGSVSLTL</sequence>
<keyword id="KW-0046">Antibiotic resistance</keyword>
<keyword id="KW-0428">Leader peptide</keyword>
<keyword id="KW-0614">Plasmid</keyword>
<reference key="1">
    <citation type="journal article" date="1990" name="Nucleic Acids Res.">
        <title>Nucleotide sequence of the tetracycline resistance gene of pBC16 from Bacillus cereus.</title>
        <authorList>
            <person name="Palva A."/>
            <person name="Vidgren G."/>
            <person name="Simonen M."/>
            <person name="Rintala H."/>
            <person name="Laamanen P."/>
        </authorList>
    </citation>
    <scope>NUCLEOTIDE SEQUENCE [GENOMIC DNA]</scope>
</reference>